<gene>
    <name type="primary">RPL44</name>
    <name type="ordered locus">YALI0B04224g</name>
</gene>
<keyword id="KW-1185">Reference proteome</keyword>
<keyword id="KW-0687">Ribonucleoprotein</keyword>
<keyword id="KW-0689">Ribosomal protein</keyword>
<accession>Q6CFS7</accession>
<feature type="initiator methionine" description="Removed" evidence="1">
    <location>
        <position position="1"/>
    </location>
</feature>
<feature type="chain" id="PRO_0000260179" description="Large ribosomal subunit protein eL42">
    <location>
        <begin position="2"/>
        <end position="106"/>
    </location>
</feature>
<reference key="1">
    <citation type="journal article" date="2004" name="Nature">
        <title>Genome evolution in yeasts.</title>
        <authorList>
            <person name="Dujon B."/>
            <person name="Sherman D."/>
            <person name="Fischer G."/>
            <person name="Durrens P."/>
            <person name="Casaregola S."/>
            <person name="Lafontaine I."/>
            <person name="de Montigny J."/>
            <person name="Marck C."/>
            <person name="Neuveglise C."/>
            <person name="Talla E."/>
            <person name="Goffard N."/>
            <person name="Frangeul L."/>
            <person name="Aigle M."/>
            <person name="Anthouard V."/>
            <person name="Babour A."/>
            <person name="Barbe V."/>
            <person name="Barnay S."/>
            <person name="Blanchin S."/>
            <person name="Beckerich J.-M."/>
            <person name="Beyne E."/>
            <person name="Bleykasten C."/>
            <person name="Boisrame A."/>
            <person name="Boyer J."/>
            <person name="Cattolico L."/>
            <person name="Confanioleri F."/>
            <person name="de Daruvar A."/>
            <person name="Despons L."/>
            <person name="Fabre E."/>
            <person name="Fairhead C."/>
            <person name="Ferry-Dumazet H."/>
            <person name="Groppi A."/>
            <person name="Hantraye F."/>
            <person name="Hennequin C."/>
            <person name="Jauniaux N."/>
            <person name="Joyet P."/>
            <person name="Kachouri R."/>
            <person name="Kerrest A."/>
            <person name="Koszul R."/>
            <person name="Lemaire M."/>
            <person name="Lesur I."/>
            <person name="Ma L."/>
            <person name="Muller H."/>
            <person name="Nicaud J.-M."/>
            <person name="Nikolski M."/>
            <person name="Oztas S."/>
            <person name="Ozier-Kalogeropoulos O."/>
            <person name="Pellenz S."/>
            <person name="Potier S."/>
            <person name="Richard G.-F."/>
            <person name="Straub M.-L."/>
            <person name="Suleau A."/>
            <person name="Swennen D."/>
            <person name="Tekaia F."/>
            <person name="Wesolowski-Louvel M."/>
            <person name="Westhof E."/>
            <person name="Wirth B."/>
            <person name="Zeniou-Meyer M."/>
            <person name="Zivanovic Y."/>
            <person name="Bolotin-Fukuhara M."/>
            <person name="Thierry A."/>
            <person name="Bouchier C."/>
            <person name="Caudron B."/>
            <person name="Scarpelli C."/>
            <person name="Gaillardin C."/>
            <person name="Weissenbach J."/>
            <person name="Wincker P."/>
            <person name="Souciet J.-L."/>
        </authorList>
    </citation>
    <scope>NUCLEOTIDE SEQUENCE [LARGE SCALE GENOMIC DNA]</scope>
    <source>
        <strain>CLIB 122 / E 150</strain>
    </source>
</reference>
<name>RL44_YARLI</name>
<sequence>MVNIPKTRNTYCKGKECRKHTQHKVTQYKAGKASLYAQGKRRYDRKQSGYGGQTKQIFHKKAKTTKKVVLRLECVKCKVKMQLALKRCKHFELGGDKKQKGQALQF</sequence>
<evidence type="ECO:0000250" key="1"/>
<evidence type="ECO:0000305" key="2"/>
<dbReference type="EMBL" id="CR382128">
    <property type="protein sequence ID" value="CAG82712.1"/>
    <property type="molecule type" value="Genomic_DNA"/>
</dbReference>
<dbReference type="RefSeq" id="XP_500485.1">
    <property type="nucleotide sequence ID" value="XM_500485.1"/>
</dbReference>
<dbReference type="SMR" id="Q6CFS7"/>
<dbReference type="FunCoup" id="Q6CFS7">
    <property type="interactions" value="718"/>
</dbReference>
<dbReference type="STRING" id="284591.Q6CFS7"/>
<dbReference type="EnsemblFungi" id="CAG82712">
    <property type="protein sequence ID" value="CAG82712"/>
    <property type="gene ID" value="YALI0_B04224g"/>
</dbReference>
<dbReference type="KEGG" id="yli:2907480"/>
<dbReference type="VEuPathDB" id="FungiDB:YALI0_B04224g"/>
<dbReference type="HOGENOM" id="CLU_114645_2_1_1"/>
<dbReference type="InParanoid" id="Q6CFS7"/>
<dbReference type="OMA" id="CKKHTIH"/>
<dbReference type="OrthoDB" id="103560at4891"/>
<dbReference type="Proteomes" id="UP000001300">
    <property type="component" value="Chromosome B"/>
</dbReference>
<dbReference type="GO" id="GO:0022625">
    <property type="term" value="C:cytosolic large ribosomal subunit"/>
    <property type="evidence" value="ECO:0000318"/>
    <property type="project" value="GO_Central"/>
</dbReference>
<dbReference type="GO" id="GO:0003735">
    <property type="term" value="F:structural constituent of ribosome"/>
    <property type="evidence" value="ECO:0007669"/>
    <property type="project" value="InterPro"/>
</dbReference>
<dbReference type="GO" id="GO:0006412">
    <property type="term" value="P:translation"/>
    <property type="evidence" value="ECO:0007669"/>
    <property type="project" value="InterPro"/>
</dbReference>
<dbReference type="FunFam" id="3.10.450.80:FF:000001">
    <property type="entry name" value="60S ribosomal protein L44"/>
    <property type="match status" value="1"/>
</dbReference>
<dbReference type="Gene3D" id="3.10.450.80">
    <property type="match status" value="1"/>
</dbReference>
<dbReference type="InterPro" id="IPR000552">
    <property type="entry name" value="Ribosomal_eL44"/>
</dbReference>
<dbReference type="InterPro" id="IPR053708">
    <property type="entry name" value="Ribosomal_LSU_eL42"/>
</dbReference>
<dbReference type="InterPro" id="IPR011332">
    <property type="entry name" value="Ribosomal_zn-bd"/>
</dbReference>
<dbReference type="PANTHER" id="PTHR10369">
    <property type="entry name" value="60S RIBOSOMAL PROTEIN L36A/L44"/>
    <property type="match status" value="1"/>
</dbReference>
<dbReference type="Pfam" id="PF00935">
    <property type="entry name" value="Ribosomal_L44"/>
    <property type="match status" value="1"/>
</dbReference>
<dbReference type="SUPFAM" id="SSF57829">
    <property type="entry name" value="Zn-binding ribosomal proteins"/>
    <property type="match status" value="1"/>
</dbReference>
<dbReference type="PROSITE" id="PS01172">
    <property type="entry name" value="RIBOSOMAL_L44E"/>
    <property type="match status" value="1"/>
</dbReference>
<protein>
    <recommendedName>
        <fullName evidence="2">Large ribosomal subunit protein eL42</fullName>
    </recommendedName>
    <alternativeName>
        <fullName>60S ribosomal protein L44</fullName>
    </alternativeName>
</protein>
<comment type="similarity">
    <text evidence="2">Belongs to the eukaryotic ribosomal protein eL42 family.</text>
</comment>
<proteinExistence type="inferred from homology"/>
<organism>
    <name type="scientific">Yarrowia lipolytica (strain CLIB 122 / E 150)</name>
    <name type="common">Yeast</name>
    <name type="synonym">Candida lipolytica</name>
    <dbReference type="NCBI Taxonomy" id="284591"/>
    <lineage>
        <taxon>Eukaryota</taxon>
        <taxon>Fungi</taxon>
        <taxon>Dikarya</taxon>
        <taxon>Ascomycota</taxon>
        <taxon>Saccharomycotina</taxon>
        <taxon>Dipodascomycetes</taxon>
        <taxon>Dipodascales</taxon>
        <taxon>Dipodascales incertae sedis</taxon>
        <taxon>Yarrowia</taxon>
    </lineage>
</organism>